<protein>
    <recommendedName>
        <fullName evidence="1">Translational regulator CsrA</fullName>
    </recommendedName>
    <alternativeName>
        <fullName evidence="1">Carbon storage regulator</fullName>
    </alternativeName>
</protein>
<comment type="function">
    <text evidence="1">A key translational regulator that binds mRNA to regulate translation initiation and/or mRNA stability. Mediates global changes in gene expression, shifting from rapid growth to stress survival by linking envelope stress, the stringent response and the catabolite repression systems. Usually binds in the 5'-UTR; binding at or near the Shine-Dalgarno sequence prevents ribosome-binding, repressing translation, binding elsewhere in the 5'-UTR can activate translation and/or stabilize the mRNA. Its function is antagonized by small RNA(s).</text>
</comment>
<comment type="subunit">
    <text evidence="1">Homodimer; the beta-strands of each monomer intercalate to form a hydrophobic core, while the alpha-helices form wings that extend away from the core.</text>
</comment>
<comment type="subcellular location">
    <subcellularLocation>
        <location evidence="1">Cytoplasm</location>
    </subcellularLocation>
</comment>
<comment type="similarity">
    <text evidence="1">Belongs to the CsrA/RsmA family.</text>
</comment>
<reference key="1">
    <citation type="journal article" date="2008" name="Genome Biol.">
        <title>The complete genome, comparative and functional analysis of Stenotrophomonas maltophilia reveals an organism heavily shielded by drug resistance determinants.</title>
        <authorList>
            <person name="Crossman L.C."/>
            <person name="Gould V.C."/>
            <person name="Dow J.M."/>
            <person name="Vernikos G.S."/>
            <person name="Okazaki A."/>
            <person name="Sebaihia M."/>
            <person name="Saunders D."/>
            <person name="Arrowsmith C."/>
            <person name="Carver T."/>
            <person name="Peters N."/>
            <person name="Adlem E."/>
            <person name="Kerhornou A."/>
            <person name="Lord A."/>
            <person name="Murphy L."/>
            <person name="Seeger K."/>
            <person name="Squares R."/>
            <person name="Rutter S."/>
            <person name="Quail M.A."/>
            <person name="Rajandream M.A."/>
            <person name="Harris D."/>
            <person name="Churcher C."/>
            <person name="Bentley S.D."/>
            <person name="Parkhill J."/>
            <person name="Thomson N.R."/>
            <person name="Avison M.B."/>
        </authorList>
    </citation>
    <scope>NUCLEOTIDE SEQUENCE [LARGE SCALE GENOMIC DNA]</scope>
    <source>
        <strain>K279a</strain>
    </source>
</reference>
<organism>
    <name type="scientific">Stenotrophomonas maltophilia (strain K279a)</name>
    <dbReference type="NCBI Taxonomy" id="522373"/>
    <lineage>
        <taxon>Bacteria</taxon>
        <taxon>Pseudomonadati</taxon>
        <taxon>Pseudomonadota</taxon>
        <taxon>Gammaproteobacteria</taxon>
        <taxon>Lysobacterales</taxon>
        <taxon>Lysobacteraceae</taxon>
        <taxon>Stenotrophomonas</taxon>
        <taxon>Stenotrophomonas maltophilia group</taxon>
    </lineage>
</organism>
<keyword id="KW-0010">Activator</keyword>
<keyword id="KW-0963">Cytoplasm</keyword>
<keyword id="KW-1185">Reference proteome</keyword>
<keyword id="KW-0678">Repressor</keyword>
<keyword id="KW-0694">RNA-binding</keyword>
<keyword id="KW-0810">Translation regulation</keyword>
<proteinExistence type="inferred from homology"/>
<sequence length="67" mass="7180">MLILTRRVGETLMIGDSVSVTVLGVKGNQVRIGITAPKDVAVHREEIYQRIQRGDEAGGTGSENSAE</sequence>
<evidence type="ECO:0000255" key="1">
    <source>
        <dbReference type="HAMAP-Rule" id="MF_00167"/>
    </source>
</evidence>
<name>CSRA_STRMK</name>
<gene>
    <name evidence="1" type="primary">csrA</name>
    <name type="ordered locus">Smlt1744</name>
</gene>
<dbReference type="EMBL" id="AM743169">
    <property type="protein sequence ID" value="CAQ45267.1"/>
    <property type="molecule type" value="Genomic_DNA"/>
</dbReference>
<dbReference type="RefSeq" id="WP_004152909.1">
    <property type="nucleotide sequence ID" value="NC_010943.1"/>
</dbReference>
<dbReference type="SMR" id="B2FL34"/>
<dbReference type="EnsemblBacteria" id="CAQ45267">
    <property type="protein sequence ID" value="CAQ45267"/>
    <property type="gene ID" value="Smlt1744"/>
</dbReference>
<dbReference type="GeneID" id="97260653"/>
<dbReference type="KEGG" id="sml:Smlt1744"/>
<dbReference type="eggNOG" id="COG1551">
    <property type="taxonomic scope" value="Bacteria"/>
</dbReference>
<dbReference type="HOGENOM" id="CLU_164837_2_1_6"/>
<dbReference type="Proteomes" id="UP000008840">
    <property type="component" value="Chromosome"/>
</dbReference>
<dbReference type="GO" id="GO:0005829">
    <property type="term" value="C:cytosol"/>
    <property type="evidence" value="ECO:0007669"/>
    <property type="project" value="TreeGrafter"/>
</dbReference>
<dbReference type="GO" id="GO:0048027">
    <property type="term" value="F:mRNA 5'-UTR binding"/>
    <property type="evidence" value="ECO:0007669"/>
    <property type="project" value="UniProtKB-UniRule"/>
</dbReference>
<dbReference type="GO" id="GO:0006402">
    <property type="term" value="P:mRNA catabolic process"/>
    <property type="evidence" value="ECO:0007669"/>
    <property type="project" value="InterPro"/>
</dbReference>
<dbReference type="GO" id="GO:0045947">
    <property type="term" value="P:negative regulation of translational initiation"/>
    <property type="evidence" value="ECO:0007669"/>
    <property type="project" value="UniProtKB-UniRule"/>
</dbReference>
<dbReference type="GO" id="GO:0045948">
    <property type="term" value="P:positive regulation of translational initiation"/>
    <property type="evidence" value="ECO:0007669"/>
    <property type="project" value="UniProtKB-UniRule"/>
</dbReference>
<dbReference type="GO" id="GO:0006109">
    <property type="term" value="P:regulation of carbohydrate metabolic process"/>
    <property type="evidence" value="ECO:0007669"/>
    <property type="project" value="UniProtKB-UniRule"/>
</dbReference>
<dbReference type="FunFam" id="2.60.40.4380:FF:000001">
    <property type="entry name" value="Translational regulator CsrA"/>
    <property type="match status" value="1"/>
</dbReference>
<dbReference type="Gene3D" id="2.60.40.4380">
    <property type="entry name" value="Translational regulator CsrA"/>
    <property type="match status" value="1"/>
</dbReference>
<dbReference type="HAMAP" id="MF_00167">
    <property type="entry name" value="CsrA"/>
    <property type="match status" value="1"/>
</dbReference>
<dbReference type="InterPro" id="IPR003751">
    <property type="entry name" value="CsrA"/>
</dbReference>
<dbReference type="InterPro" id="IPR036107">
    <property type="entry name" value="CsrA_sf"/>
</dbReference>
<dbReference type="NCBIfam" id="TIGR00202">
    <property type="entry name" value="csrA"/>
    <property type="match status" value="1"/>
</dbReference>
<dbReference type="NCBIfam" id="NF002469">
    <property type="entry name" value="PRK01712.1"/>
    <property type="match status" value="1"/>
</dbReference>
<dbReference type="PANTHER" id="PTHR34984">
    <property type="entry name" value="CARBON STORAGE REGULATOR"/>
    <property type="match status" value="1"/>
</dbReference>
<dbReference type="PANTHER" id="PTHR34984:SF1">
    <property type="entry name" value="CARBON STORAGE REGULATOR"/>
    <property type="match status" value="1"/>
</dbReference>
<dbReference type="Pfam" id="PF02599">
    <property type="entry name" value="CsrA"/>
    <property type="match status" value="1"/>
</dbReference>
<dbReference type="SUPFAM" id="SSF117130">
    <property type="entry name" value="CsrA-like"/>
    <property type="match status" value="1"/>
</dbReference>
<accession>B2FL34</accession>
<feature type="chain" id="PRO_1000097512" description="Translational regulator CsrA">
    <location>
        <begin position="1"/>
        <end position="67"/>
    </location>
</feature>